<dbReference type="EC" id="5.2.1.8" evidence="1"/>
<dbReference type="EMBL" id="AL935263">
    <property type="protein sequence ID" value="CCC79353.1"/>
    <property type="molecule type" value="Genomic_DNA"/>
</dbReference>
<dbReference type="RefSeq" id="WP_003645655.1">
    <property type="nucleotide sequence ID" value="NC_004567.2"/>
</dbReference>
<dbReference type="RefSeq" id="YP_004889867.1">
    <property type="nucleotide sequence ID" value="NC_004567.2"/>
</dbReference>
<dbReference type="SMR" id="Q88VE1"/>
<dbReference type="STRING" id="220668.lp_2118"/>
<dbReference type="EnsemblBacteria" id="CCC79353">
    <property type="protein sequence ID" value="CCC79353"/>
    <property type="gene ID" value="lp_2118"/>
</dbReference>
<dbReference type="KEGG" id="lpl:lp_2118"/>
<dbReference type="PATRIC" id="fig|220668.9.peg.1794"/>
<dbReference type="eggNOG" id="COG0544">
    <property type="taxonomic scope" value="Bacteria"/>
</dbReference>
<dbReference type="HOGENOM" id="CLU_033058_3_2_9"/>
<dbReference type="OrthoDB" id="9767721at2"/>
<dbReference type="PhylomeDB" id="Q88VE1"/>
<dbReference type="Proteomes" id="UP000000432">
    <property type="component" value="Chromosome"/>
</dbReference>
<dbReference type="GO" id="GO:0005737">
    <property type="term" value="C:cytoplasm"/>
    <property type="evidence" value="ECO:0007669"/>
    <property type="project" value="UniProtKB-SubCell"/>
</dbReference>
<dbReference type="GO" id="GO:0003755">
    <property type="term" value="F:peptidyl-prolyl cis-trans isomerase activity"/>
    <property type="evidence" value="ECO:0007669"/>
    <property type="project" value="UniProtKB-UniRule"/>
</dbReference>
<dbReference type="GO" id="GO:0044183">
    <property type="term" value="F:protein folding chaperone"/>
    <property type="evidence" value="ECO:0007669"/>
    <property type="project" value="TreeGrafter"/>
</dbReference>
<dbReference type="GO" id="GO:0043022">
    <property type="term" value="F:ribosome binding"/>
    <property type="evidence" value="ECO:0007669"/>
    <property type="project" value="TreeGrafter"/>
</dbReference>
<dbReference type="GO" id="GO:0051083">
    <property type="term" value="P:'de novo' cotranslational protein folding"/>
    <property type="evidence" value="ECO:0007669"/>
    <property type="project" value="TreeGrafter"/>
</dbReference>
<dbReference type="GO" id="GO:0051301">
    <property type="term" value="P:cell division"/>
    <property type="evidence" value="ECO:0007669"/>
    <property type="project" value="UniProtKB-KW"/>
</dbReference>
<dbReference type="GO" id="GO:0061077">
    <property type="term" value="P:chaperone-mediated protein folding"/>
    <property type="evidence" value="ECO:0007669"/>
    <property type="project" value="TreeGrafter"/>
</dbReference>
<dbReference type="GO" id="GO:0015031">
    <property type="term" value="P:protein transport"/>
    <property type="evidence" value="ECO:0007669"/>
    <property type="project" value="UniProtKB-UniRule"/>
</dbReference>
<dbReference type="GO" id="GO:0043335">
    <property type="term" value="P:protein unfolding"/>
    <property type="evidence" value="ECO:0007669"/>
    <property type="project" value="TreeGrafter"/>
</dbReference>
<dbReference type="FunFam" id="3.10.50.40:FF:000001">
    <property type="entry name" value="Trigger factor"/>
    <property type="match status" value="1"/>
</dbReference>
<dbReference type="Gene3D" id="3.10.50.40">
    <property type="match status" value="1"/>
</dbReference>
<dbReference type="Gene3D" id="3.30.70.1050">
    <property type="entry name" value="Trigger factor ribosome-binding domain"/>
    <property type="match status" value="1"/>
</dbReference>
<dbReference type="Gene3D" id="1.10.3120.10">
    <property type="entry name" value="Trigger factor, C-terminal domain"/>
    <property type="match status" value="1"/>
</dbReference>
<dbReference type="HAMAP" id="MF_00303">
    <property type="entry name" value="Trigger_factor_Tig"/>
    <property type="match status" value="1"/>
</dbReference>
<dbReference type="InterPro" id="IPR046357">
    <property type="entry name" value="PPIase_dom_sf"/>
</dbReference>
<dbReference type="InterPro" id="IPR001179">
    <property type="entry name" value="PPIase_FKBP_dom"/>
</dbReference>
<dbReference type="InterPro" id="IPR005215">
    <property type="entry name" value="Trig_fac"/>
</dbReference>
<dbReference type="InterPro" id="IPR008880">
    <property type="entry name" value="Trigger_fac_C"/>
</dbReference>
<dbReference type="InterPro" id="IPR037041">
    <property type="entry name" value="Trigger_fac_C_sf"/>
</dbReference>
<dbReference type="InterPro" id="IPR008881">
    <property type="entry name" value="Trigger_fac_ribosome-bd_bac"/>
</dbReference>
<dbReference type="InterPro" id="IPR036611">
    <property type="entry name" value="Trigger_fac_ribosome-bd_sf"/>
</dbReference>
<dbReference type="InterPro" id="IPR027304">
    <property type="entry name" value="Trigger_fact/SurA_dom_sf"/>
</dbReference>
<dbReference type="NCBIfam" id="TIGR00115">
    <property type="entry name" value="tig"/>
    <property type="match status" value="1"/>
</dbReference>
<dbReference type="PANTHER" id="PTHR30560">
    <property type="entry name" value="TRIGGER FACTOR CHAPERONE AND PEPTIDYL-PROLYL CIS/TRANS ISOMERASE"/>
    <property type="match status" value="1"/>
</dbReference>
<dbReference type="PANTHER" id="PTHR30560:SF3">
    <property type="entry name" value="TRIGGER FACTOR-LIKE PROTEIN TIG, CHLOROPLASTIC"/>
    <property type="match status" value="1"/>
</dbReference>
<dbReference type="Pfam" id="PF00254">
    <property type="entry name" value="FKBP_C"/>
    <property type="match status" value="1"/>
</dbReference>
<dbReference type="Pfam" id="PF05698">
    <property type="entry name" value="Trigger_C"/>
    <property type="match status" value="1"/>
</dbReference>
<dbReference type="Pfam" id="PF05697">
    <property type="entry name" value="Trigger_N"/>
    <property type="match status" value="1"/>
</dbReference>
<dbReference type="PIRSF" id="PIRSF003095">
    <property type="entry name" value="Trigger_factor"/>
    <property type="match status" value="1"/>
</dbReference>
<dbReference type="SUPFAM" id="SSF54534">
    <property type="entry name" value="FKBP-like"/>
    <property type="match status" value="1"/>
</dbReference>
<dbReference type="SUPFAM" id="SSF109998">
    <property type="entry name" value="Triger factor/SurA peptide-binding domain-like"/>
    <property type="match status" value="1"/>
</dbReference>
<dbReference type="SUPFAM" id="SSF102735">
    <property type="entry name" value="Trigger factor ribosome-binding domain"/>
    <property type="match status" value="1"/>
</dbReference>
<dbReference type="PROSITE" id="PS50059">
    <property type="entry name" value="FKBP_PPIASE"/>
    <property type="match status" value="1"/>
</dbReference>
<organism>
    <name type="scientific">Lactiplantibacillus plantarum (strain ATCC BAA-793 / NCIMB 8826 / WCFS1)</name>
    <name type="common">Lactobacillus plantarum</name>
    <dbReference type="NCBI Taxonomy" id="220668"/>
    <lineage>
        <taxon>Bacteria</taxon>
        <taxon>Bacillati</taxon>
        <taxon>Bacillota</taxon>
        <taxon>Bacilli</taxon>
        <taxon>Lactobacillales</taxon>
        <taxon>Lactobacillaceae</taxon>
        <taxon>Lactiplantibacillus</taxon>
    </lineage>
</organism>
<protein>
    <recommendedName>
        <fullName evidence="1">Trigger factor</fullName>
        <shortName evidence="1">TF</shortName>
        <ecNumber evidence="1">5.2.1.8</ecNumber>
    </recommendedName>
    <alternativeName>
        <fullName evidence="1">PPIase</fullName>
    </alternativeName>
</protein>
<gene>
    <name evidence="1" type="primary">tig</name>
    <name type="ordered locus">lp_2118</name>
</gene>
<proteinExistence type="inferred from homology"/>
<evidence type="ECO:0000255" key="1">
    <source>
        <dbReference type="HAMAP-Rule" id="MF_00303"/>
    </source>
</evidence>
<sequence>MAAKWEKKEGNQGELTFEIGADKISEGIDKAFQRTKKNLNVPGFRKGKVPRQIFNQMYGEEALYQDALNIVLPEAYEEAIKETEIEPVDQPQIDVDSMEKGKPWVLKAVVTVKPEVKLGQYKELSVTRQNTRVYAKDVDAELESRREKQAELVLKEDQPAAKGDTVVIDFKGFVDGEPFEGGESENYSLELGSNSFIPGFEDQLVGVKAGDETEVKVTFPKDYQAEDLQDKEATFKVTVHEVKTKELPELDDEFAKDVDEDVDTLEELKAKIKDELKEQKESAAHDAIEDEALNQAVDNAEIQAIPDAMKEDDIHRQMDQYLANMQQQGIDPKTYYKLTGTTEDDLHKQFAADAERRVKTNLVLEAVVEAENIKPSQDEIAAEVKDLASQYNMEESAVRGALTDDMLSHDIAIRQAVDLIADSAKQNAKAEDKKDDSDKN</sequence>
<accession>Q88VE1</accession>
<accession>F9UQ64</accession>
<keyword id="KW-0131">Cell cycle</keyword>
<keyword id="KW-0132">Cell division</keyword>
<keyword id="KW-0143">Chaperone</keyword>
<keyword id="KW-0963">Cytoplasm</keyword>
<keyword id="KW-0413">Isomerase</keyword>
<keyword id="KW-1185">Reference proteome</keyword>
<keyword id="KW-0697">Rotamase</keyword>
<feature type="chain" id="PRO_0000179368" description="Trigger factor">
    <location>
        <begin position="1"/>
        <end position="440"/>
    </location>
</feature>
<feature type="domain" description="PPIase FKBP-type" evidence="1">
    <location>
        <begin position="163"/>
        <end position="248"/>
    </location>
</feature>
<comment type="function">
    <text evidence="1">Involved in protein export. Acts as a chaperone by maintaining the newly synthesized protein in an open conformation. Functions as a peptidyl-prolyl cis-trans isomerase.</text>
</comment>
<comment type="catalytic activity">
    <reaction evidence="1">
        <text>[protein]-peptidylproline (omega=180) = [protein]-peptidylproline (omega=0)</text>
        <dbReference type="Rhea" id="RHEA:16237"/>
        <dbReference type="Rhea" id="RHEA-COMP:10747"/>
        <dbReference type="Rhea" id="RHEA-COMP:10748"/>
        <dbReference type="ChEBI" id="CHEBI:83833"/>
        <dbReference type="ChEBI" id="CHEBI:83834"/>
        <dbReference type="EC" id="5.2.1.8"/>
    </reaction>
</comment>
<comment type="subcellular location">
    <subcellularLocation>
        <location>Cytoplasm</location>
    </subcellularLocation>
    <text evidence="1">About half TF is bound to the ribosome near the polypeptide exit tunnel while the other half is free in the cytoplasm.</text>
</comment>
<comment type="domain">
    <text evidence="1">Consists of 3 domains; the N-terminus binds the ribosome, the middle domain has PPIase activity, while the C-terminus has intrinsic chaperone activity on its own.</text>
</comment>
<comment type="similarity">
    <text evidence="1">Belongs to the FKBP-type PPIase family. Tig subfamily.</text>
</comment>
<name>TIG_LACPL</name>
<reference key="1">
    <citation type="journal article" date="2003" name="Proc. Natl. Acad. Sci. U.S.A.">
        <title>Complete genome sequence of Lactobacillus plantarum WCFS1.</title>
        <authorList>
            <person name="Kleerebezem M."/>
            <person name="Boekhorst J."/>
            <person name="van Kranenburg R."/>
            <person name="Molenaar D."/>
            <person name="Kuipers O.P."/>
            <person name="Leer R."/>
            <person name="Tarchini R."/>
            <person name="Peters S.A."/>
            <person name="Sandbrink H.M."/>
            <person name="Fiers M.W.E.J."/>
            <person name="Stiekema W."/>
            <person name="Klein Lankhorst R.M."/>
            <person name="Bron P.A."/>
            <person name="Hoffer S.M."/>
            <person name="Nierop Groot M.N."/>
            <person name="Kerkhoven R."/>
            <person name="De Vries M."/>
            <person name="Ursing B."/>
            <person name="De Vos W.M."/>
            <person name="Siezen R.J."/>
        </authorList>
    </citation>
    <scope>NUCLEOTIDE SEQUENCE [LARGE SCALE GENOMIC DNA]</scope>
    <source>
        <strain>ATCC BAA-793 / NCIMB 8826 / WCFS1</strain>
    </source>
</reference>
<reference key="2">
    <citation type="journal article" date="2012" name="J. Bacteriol.">
        <title>Complete resequencing and reannotation of the Lactobacillus plantarum WCFS1 genome.</title>
        <authorList>
            <person name="Siezen R.J."/>
            <person name="Francke C."/>
            <person name="Renckens B."/>
            <person name="Boekhorst J."/>
            <person name="Wels M."/>
            <person name="Kleerebezem M."/>
            <person name="van Hijum S.A."/>
        </authorList>
    </citation>
    <scope>NUCLEOTIDE SEQUENCE [LARGE SCALE GENOMIC DNA]</scope>
    <scope>GENOME REANNOTATION</scope>
    <source>
        <strain>ATCC BAA-793 / NCIMB 8826 / WCFS1</strain>
    </source>
</reference>